<proteinExistence type="inferred from homology"/>
<organism>
    <name type="scientific">Yersinia enterocolitica serotype O:8 / biotype 1B (strain NCTC 13174 / 8081)</name>
    <dbReference type="NCBI Taxonomy" id="393305"/>
    <lineage>
        <taxon>Bacteria</taxon>
        <taxon>Pseudomonadati</taxon>
        <taxon>Pseudomonadota</taxon>
        <taxon>Gammaproteobacteria</taxon>
        <taxon>Enterobacterales</taxon>
        <taxon>Yersiniaceae</taxon>
        <taxon>Yersinia</taxon>
    </lineage>
</organism>
<sequence>MSGWRKIYYKLLNLPLKLLVKSKVIPADPVTELGLDPSRPILYVLPYNSKADLLTLRAQCQAQDLPDPLIPLEIDGVQLPSHVFIDNGPRVFRYYAPKQESVKIFHDYLDLHRNNPELDIQMLPVSVMFGRSPGREGHGTPHLRVLNGVQKFFAVLWLGRDSFVRFSTTVSLRRMASEHGTDKTIAHKLARVARMHFSRQRLAAVGPSLPARQDLFKKLLTSKAIEKAVADEARTKKISHEKAQQNAITLMEEIAADFSYEAVRLSDRVLSWTWNRLYQGINVHNAERVRQLAQDGHEIVYVPCHRSHMDYLLLSYVLYHQGLVPPHIAAGINLNFWPAGPIFRRLGAFFIRRTFKGNKLYSTVFREYLGELFTRGYSVEYFVEGGRSRTGRLLEPKTGTLSMTIQAMLRGGSRPITLVPIYIGYEHVMEVGTYAKELRGATKEKESLLQMLRGLRKLRNLGQGYVNFGEPIPLTTYLNTNVPQWRDAIDPIEAQRPSWLTPAVNDLAGKIMVRINNAAAANAMNLCSTALLASRQRSLTREQLLEQLDCYLQLMRNVPYAKDVTVPDKTPEELLNHALNMNKFEVEKDNIGDIIILPREQAVLMTYYRNNIQHLLILPSLIASMVMYQRRITRAELLRQISMIYPMLKAELFLHYSKEQLPQTLDTLIDELARQQLICDKGSELVLNPARIRPLQLLAAGVRETLQRYAITLSLLSANPSINRGALEKESRIMAQRLSVLHGINAPEFFDKAVFSTLVGTLREEGYISDSGDAIQEHTLEVYNMLSALMTPEVKLTIESVSMPAETNNLLPEPEAEDKEEN</sequence>
<dbReference type="EC" id="2.3.1.15" evidence="1"/>
<dbReference type="EMBL" id="AM286415">
    <property type="protein sequence ID" value="CAL13879.1"/>
    <property type="molecule type" value="Genomic_DNA"/>
</dbReference>
<dbReference type="RefSeq" id="WP_005174551.1">
    <property type="nucleotide sequence ID" value="NC_008800.1"/>
</dbReference>
<dbReference type="RefSeq" id="YP_001008005.1">
    <property type="nucleotide sequence ID" value="NC_008800.1"/>
</dbReference>
<dbReference type="SMR" id="A1JRU2"/>
<dbReference type="KEGG" id="yen:YE3857"/>
<dbReference type="PATRIC" id="fig|393305.7.peg.4108"/>
<dbReference type="eggNOG" id="COG2937">
    <property type="taxonomic scope" value="Bacteria"/>
</dbReference>
<dbReference type="HOGENOM" id="CLU_015407_0_0_6"/>
<dbReference type="OrthoDB" id="335193at2"/>
<dbReference type="UniPathway" id="UPA00557">
    <property type="reaction ID" value="UER00612"/>
</dbReference>
<dbReference type="Proteomes" id="UP000000642">
    <property type="component" value="Chromosome"/>
</dbReference>
<dbReference type="GO" id="GO:0005886">
    <property type="term" value="C:plasma membrane"/>
    <property type="evidence" value="ECO:0007669"/>
    <property type="project" value="UniProtKB-SubCell"/>
</dbReference>
<dbReference type="GO" id="GO:0004366">
    <property type="term" value="F:glycerol-3-phosphate O-acyltransferase activity"/>
    <property type="evidence" value="ECO:0007669"/>
    <property type="project" value="UniProtKB-UniRule"/>
</dbReference>
<dbReference type="GO" id="GO:0016024">
    <property type="term" value="P:CDP-diacylglycerol biosynthetic process"/>
    <property type="evidence" value="ECO:0007669"/>
    <property type="project" value="UniProtKB-UniRule"/>
</dbReference>
<dbReference type="GO" id="GO:0006631">
    <property type="term" value="P:fatty acid metabolic process"/>
    <property type="evidence" value="ECO:0007669"/>
    <property type="project" value="TreeGrafter"/>
</dbReference>
<dbReference type="CDD" id="cd07993">
    <property type="entry name" value="LPLAT_DHAPAT-like"/>
    <property type="match status" value="1"/>
</dbReference>
<dbReference type="HAMAP" id="MF_00393">
    <property type="entry name" value="Glyc3P_acyltrans"/>
    <property type="match status" value="1"/>
</dbReference>
<dbReference type="InterPro" id="IPR022284">
    <property type="entry name" value="GPAT/DHAPAT"/>
</dbReference>
<dbReference type="InterPro" id="IPR045520">
    <property type="entry name" value="GPAT/DHAPAT_C"/>
</dbReference>
<dbReference type="InterPro" id="IPR041728">
    <property type="entry name" value="GPAT/DHAPAT_LPLAT"/>
</dbReference>
<dbReference type="InterPro" id="IPR028354">
    <property type="entry name" value="GPAT_PlsB"/>
</dbReference>
<dbReference type="InterPro" id="IPR002123">
    <property type="entry name" value="Plipid/glycerol_acylTrfase"/>
</dbReference>
<dbReference type="NCBIfam" id="TIGR03703">
    <property type="entry name" value="plsB"/>
    <property type="match status" value="1"/>
</dbReference>
<dbReference type="NCBIfam" id="NF003441">
    <property type="entry name" value="PRK04974.1"/>
    <property type="match status" value="1"/>
</dbReference>
<dbReference type="PANTHER" id="PTHR12563:SF17">
    <property type="entry name" value="DIHYDROXYACETONE PHOSPHATE ACYLTRANSFERASE"/>
    <property type="match status" value="1"/>
</dbReference>
<dbReference type="PANTHER" id="PTHR12563">
    <property type="entry name" value="GLYCEROL-3-PHOSPHATE ACYLTRANSFERASE"/>
    <property type="match status" value="1"/>
</dbReference>
<dbReference type="Pfam" id="PF01553">
    <property type="entry name" value="Acyltransferase"/>
    <property type="match status" value="1"/>
</dbReference>
<dbReference type="Pfam" id="PF19277">
    <property type="entry name" value="GPAT_C"/>
    <property type="match status" value="1"/>
</dbReference>
<dbReference type="PIRSF" id="PIRSF500064">
    <property type="entry name" value="GPAT"/>
    <property type="match status" value="1"/>
</dbReference>
<dbReference type="PIRSF" id="PIRSF000437">
    <property type="entry name" value="GPAT_DHAPAT"/>
    <property type="match status" value="1"/>
</dbReference>
<dbReference type="SMART" id="SM00563">
    <property type="entry name" value="PlsC"/>
    <property type="match status" value="1"/>
</dbReference>
<dbReference type="SUPFAM" id="SSF69593">
    <property type="entry name" value="Glycerol-3-phosphate (1)-acyltransferase"/>
    <property type="match status" value="1"/>
</dbReference>
<keyword id="KW-0012">Acyltransferase</keyword>
<keyword id="KW-0997">Cell inner membrane</keyword>
<keyword id="KW-1003">Cell membrane</keyword>
<keyword id="KW-0444">Lipid biosynthesis</keyword>
<keyword id="KW-0443">Lipid metabolism</keyword>
<keyword id="KW-0472">Membrane</keyword>
<keyword id="KW-0594">Phospholipid biosynthesis</keyword>
<keyword id="KW-1208">Phospholipid metabolism</keyword>
<keyword id="KW-0808">Transferase</keyword>
<name>PLSB_YERE8</name>
<accession>A1JRU2</accession>
<protein>
    <recommendedName>
        <fullName evidence="1">Glycerol-3-phosphate acyltransferase</fullName>
        <shortName evidence="1">GPAT</shortName>
        <ecNumber evidence="1">2.3.1.15</ecNumber>
    </recommendedName>
</protein>
<gene>
    <name evidence="1" type="primary">plsB</name>
    <name type="ordered locus">YE3857</name>
</gene>
<evidence type="ECO:0000255" key="1">
    <source>
        <dbReference type="HAMAP-Rule" id="MF_00393"/>
    </source>
</evidence>
<feature type="chain" id="PRO_1000049470" description="Glycerol-3-phosphate acyltransferase">
    <location>
        <begin position="1"/>
        <end position="822"/>
    </location>
</feature>
<feature type="short sequence motif" description="HXXXXD motif">
    <location>
        <begin position="304"/>
        <end position="309"/>
    </location>
</feature>
<comment type="catalytic activity">
    <reaction evidence="1">
        <text>sn-glycerol 3-phosphate + an acyl-CoA = a 1-acyl-sn-glycero-3-phosphate + CoA</text>
        <dbReference type="Rhea" id="RHEA:15325"/>
        <dbReference type="ChEBI" id="CHEBI:57287"/>
        <dbReference type="ChEBI" id="CHEBI:57597"/>
        <dbReference type="ChEBI" id="CHEBI:57970"/>
        <dbReference type="ChEBI" id="CHEBI:58342"/>
        <dbReference type="EC" id="2.3.1.15"/>
    </reaction>
</comment>
<comment type="pathway">
    <text evidence="1">Phospholipid metabolism; CDP-diacylglycerol biosynthesis; CDP-diacylglycerol from sn-glycerol 3-phosphate: step 1/3.</text>
</comment>
<comment type="subcellular location">
    <subcellularLocation>
        <location evidence="1">Cell inner membrane</location>
        <topology evidence="1">Peripheral membrane protein</topology>
        <orientation evidence="1">Cytoplasmic side</orientation>
    </subcellularLocation>
</comment>
<comment type="domain">
    <text evidence="1">The HXXXXD motif is essential for acyltransferase activity and may constitute the binding site for the phosphate moiety of the glycerol-3-phosphate.</text>
</comment>
<comment type="similarity">
    <text evidence="1">Belongs to the GPAT/DAPAT family.</text>
</comment>
<reference key="1">
    <citation type="journal article" date="2006" name="PLoS Genet.">
        <title>The complete genome sequence and comparative genome analysis of the high pathogenicity Yersinia enterocolitica strain 8081.</title>
        <authorList>
            <person name="Thomson N.R."/>
            <person name="Howard S."/>
            <person name="Wren B.W."/>
            <person name="Holden M.T.G."/>
            <person name="Crossman L."/>
            <person name="Challis G.L."/>
            <person name="Churcher C."/>
            <person name="Mungall K."/>
            <person name="Brooks K."/>
            <person name="Chillingworth T."/>
            <person name="Feltwell T."/>
            <person name="Abdellah Z."/>
            <person name="Hauser H."/>
            <person name="Jagels K."/>
            <person name="Maddison M."/>
            <person name="Moule S."/>
            <person name="Sanders M."/>
            <person name="Whitehead S."/>
            <person name="Quail M.A."/>
            <person name="Dougan G."/>
            <person name="Parkhill J."/>
            <person name="Prentice M.B."/>
        </authorList>
    </citation>
    <scope>NUCLEOTIDE SEQUENCE [LARGE SCALE GENOMIC DNA]</scope>
    <source>
        <strain>NCTC 13174 / 8081</strain>
    </source>
</reference>